<dbReference type="EC" id="2.3.1.274" evidence="1"/>
<dbReference type="EMBL" id="CP001147">
    <property type="protein sequence ID" value="ACI20380.1"/>
    <property type="molecule type" value="Genomic_DNA"/>
</dbReference>
<dbReference type="RefSeq" id="WP_012545117.1">
    <property type="nucleotide sequence ID" value="NC_011296.1"/>
</dbReference>
<dbReference type="RefSeq" id="YP_002249275.1">
    <property type="nucleotide sequence ID" value="NC_011296.1"/>
</dbReference>
<dbReference type="SMR" id="B5YG77"/>
<dbReference type="FunCoup" id="B5YG77">
    <property type="interactions" value="281"/>
</dbReference>
<dbReference type="STRING" id="289376.THEYE_A1478"/>
<dbReference type="EnsemblBacteria" id="ACI20380">
    <property type="protein sequence ID" value="ACI20380"/>
    <property type="gene ID" value="THEYE_A1478"/>
</dbReference>
<dbReference type="KEGG" id="tye:THEYE_A1478"/>
<dbReference type="PATRIC" id="fig|289376.4.peg.1437"/>
<dbReference type="eggNOG" id="COG0416">
    <property type="taxonomic scope" value="Bacteria"/>
</dbReference>
<dbReference type="HOGENOM" id="CLU_039379_1_1_0"/>
<dbReference type="InParanoid" id="B5YG77"/>
<dbReference type="OrthoDB" id="9806408at2"/>
<dbReference type="UniPathway" id="UPA00085"/>
<dbReference type="Proteomes" id="UP000000718">
    <property type="component" value="Chromosome"/>
</dbReference>
<dbReference type="GO" id="GO:0005737">
    <property type="term" value="C:cytoplasm"/>
    <property type="evidence" value="ECO:0007669"/>
    <property type="project" value="UniProtKB-SubCell"/>
</dbReference>
<dbReference type="GO" id="GO:0043811">
    <property type="term" value="F:phosphate:acyl-[acyl carrier protein] acyltransferase activity"/>
    <property type="evidence" value="ECO:0007669"/>
    <property type="project" value="UniProtKB-UniRule"/>
</dbReference>
<dbReference type="GO" id="GO:0006633">
    <property type="term" value="P:fatty acid biosynthetic process"/>
    <property type="evidence" value="ECO:0007669"/>
    <property type="project" value="UniProtKB-UniRule"/>
</dbReference>
<dbReference type="GO" id="GO:0008654">
    <property type="term" value="P:phospholipid biosynthetic process"/>
    <property type="evidence" value="ECO:0007669"/>
    <property type="project" value="UniProtKB-KW"/>
</dbReference>
<dbReference type="Gene3D" id="3.40.718.10">
    <property type="entry name" value="Isopropylmalate Dehydrogenase"/>
    <property type="match status" value="1"/>
</dbReference>
<dbReference type="HAMAP" id="MF_00019">
    <property type="entry name" value="PlsX"/>
    <property type="match status" value="1"/>
</dbReference>
<dbReference type="InterPro" id="IPR003664">
    <property type="entry name" value="FA_synthesis"/>
</dbReference>
<dbReference type="InterPro" id="IPR012281">
    <property type="entry name" value="Phospholipid_synth_PlsX-like"/>
</dbReference>
<dbReference type="NCBIfam" id="TIGR00182">
    <property type="entry name" value="plsX"/>
    <property type="match status" value="1"/>
</dbReference>
<dbReference type="PANTHER" id="PTHR30100">
    <property type="entry name" value="FATTY ACID/PHOSPHOLIPID SYNTHESIS PROTEIN PLSX"/>
    <property type="match status" value="1"/>
</dbReference>
<dbReference type="PANTHER" id="PTHR30100:SF1">
    <property type="entry name" value="PHOSPHATE ACYLTRANSFERASE"/>
    <property type="match status" value="1"/>
</dbReference>
<dbReference type="Pfam" id="PF02504">
    <property type="entry name" value="FA_synthesis"/>
    <property type="match status" value="1"/>
</dbReference>
<dbReference type="PIRSF" id="PIRSF002465">
    <property type="entry name" value="Phsphlp_syn_PlsX"/>
    <property type="match status" value="1"/>
</dbReference>
<dbReference type="SUPFAM" id="SSF53659">
    <property type="entry name" value="Isocitrate/Isopropylmalate dehydrogenase-like"/>
    <property type="match status" value="1"/>
</dbReference>
<feature type="chain" id="PRO_1000193153" description="Phosphate acyltransferase">
    <location>
        <begin position="1"/>
        <end position="345"/>
    </location>
</feature>
<sequence>MLKIAVDAMGGDFAPEVNILGAYEVVQDIEVEIILVGDEKKIKSFLPEKKETKGIISVIPADDVIQMDENISSALRRKNTSMRKAVELVKAGKADAVISAGHSGAMMALSFLLLGKLPNVERPAIATVMPCLKGHFILLDAGANVDCKPEHLVQFAFMGEAYHKALFNSQSPKIALLSIGEEGSKGNELTKEAFKLLKSSRLNFVGNIEGKDIFFGQADVVVCDGFVGNIVLKVGEGLAEALMKMLKREIADIITGKLGYMMIKPAIKSFRKKVDYSEYGGALLLGINGTSIICHGRSSAKAIKNAIKVATEMVKKQIYTRISESLNQTEERDESQNSVNRLLCS</sequence>
<evidence type="ECO:0000255" key="1">
    <source>
        <dbReference type="HAMAP-Rule" id="MF_00019"/>
    </source>
</evidence>
<keyword id="KW-0963">Cytoplasm</keyword>
<keyword id="KW-0444">Lipid biosynthesis</keyword>
<keyword id="KW-0443">Lipid metabolism</keyword>
<keyword id="KW-0594">Phospholipid biosynthesis</keyword>
<keyword id="KW-1208">Phospholipid metabolism</keyword>
<keyword id="KW-1185">Reference proteome</keyword>
<keyword id="KW-0808">Transferase</keyword>
<accession>B5YG77</accession>
<organism>
    <name type="scientific">Thermodesulfovibrio yellowstonii (strain ATCC 51303 / DSM 11347 / YP87)</name>
    <dbReference type="NCBI Taxonomy" id="289376"/>
    <lineage>
        <taxon>Bacteria</taxon>
        <taxon>Pseudomonadati</taxon>
        <taxon>Nitrospirota</taxon>
        <taxon>Thermodesulfovibrionia</taxon>
        <taxon>Thermodesulfovibrionales</taxon>
        <taxon>Thermodesulfovibrionaceae</taxon>
        <taxon>Thermodesulfovibrio</taxon>
    </lineage>
</organism>
<gene>
    <name evidence="1" type="primary">plsX</name>
    <name type="ordered locus">THEYE_A1478</name>
</gene>
<name>PLSX_THEYD</name>
<proteinExistence type="inferred from homology"/>
<reference key="1">
    <citation type="submission" date="2008-08" db="EMBL/GenBank/DDBJ databases">
        <title>The complete genome sequence of Thermodesulfovibrio yellowstonii strain ATCC 51303 / DSM 11347 / YP87.</title>
        <authorList>
            <person name="Dodson R.J."/>
            <person name="Durkin A.S."/>
            <person name="Wu M."/>
            <person name="Eisen J."/>
            <person name="Sutton G."/>
        </authorList>
    </citation>
    <scope>NUCLEOTIDE SEQUENCE [LARGE SCALE GENOMIC DNA]</scope>
    <source>
        <strain>ATCC 51303 / DSM 11347 / YP87</strain>
    </source>
</reference>
<protein>
    <recommendedName>
        <fullName evidence="1">Phosphate acyltransferase</fullName>
        <ecNumber evidence="1">2.3.1.274</ecNumber>
    </recommendedName>
    <alternativeName>
        <fullName evidence="1">Acyl-ACP phosphotransacylase</fullName>
    </alternativeName>
    <alternativeName>
        <fullName evidence="1">Acyl-[acyl-carrier-protein]--phosphate acyltransferase</fullName>
    </alternativeName>
    <alternativeName>
        <fullName evidence="1">Phosphate-acyl-ACP acyltransferase</fullName>
    </alternativeName>
</protein>
<comment type="function">
    <text evidence="1">Catalyzes the reversible formation of acyl-phosphate (acyl-PO(4)) from acyl-[acyl-carrier-protein] (acyl-ACP). This enzyme utilizes acyl-ACP as fatty acyl donor, but not acyl-CoA.</text>
</comment>
<comment type="catalytic activity">
    <reaction evidence="1">
        <text>a fatty acyl-[ACP] + phosphate = an acyl phosphate + holo-[ACP]</text>
        <dbReference type="Rhea" id="RHEA:42292"/>
        <dbReference type="Rhea" id="RHEA-COMP:9685"/>
        <dbReference type="Rhea" id="RHEA-COMP:14125"/>
        <dbReference type="ChEBI" id="CHEBI:43474"/>
        <dbReference type="ChEBI" id="CHEBI:59918"/>
        <dbReference type="ChEBI" id="CHEBI:64479"/>
        <dbReference type="ChEBI" id="CHEBI:138651"/>
        <dbReference type="EC" id="2.3.1.274"/>
    </reaction>
</comment>
<comment type="pathway">
    <text evidence="1">Lipid metabolism; phospholipid metabolism.</text>
</comment>
<comment type="subunit">
    <text evidence="1">Homodimer. Probably interacts with PlsY.</text>
</comment>
<comment type="subcellular location">
    <subcellularLocation>
        <location evidence="1">Cytoplasm</location>
    </subcellularLocation>
    <text evidence="1">Associated with the membrane possibly through PlsY.</text>
</comment>
<comment type="similarity">
    <text evidence="1">Belongs to the PlsX family.</text>
</comment>